<organism>
    <name type="scientific">Methylobacterium sp. (strain 4-46)</name>
    <dbReference type="NCBI Taxonomy" id="426117"/>
    <lineage>
        <taxon>Bacteria</taxon>
        <taxon>Pseudomonadati</taxon>
        <taxon>Pseudomonadota</taxon>
        <taxon>Alphaproteobacteria</taxon>
        <taxon>Hyphomicrobiales</taxon>
        <taxon>Methylobacteriaceae</taxon>
        <taxon>Methylobacterium</taxon>
    </lineage>
</organism>
<comment type="function">
    <text evidence="1">Catalyzes the GTP-dependent ribosomal translocation step during translation elongation. During this step, the ribosome changes from the pre-translocational (PRE) to the post-translocational (POST) state as the newly formed A-site-bound peptidyl-tRNA and P-site-bound deacylated tRNA move to the P and E sites, respectively. Catalyzes the coordinated movement of the two tRNA molecules, the mRNA and conformational changes in the ribosome.</text>
</comment>
<comment type="subcellular location">
    <subcellularLocation>
        <location evidence="1">Cytoplasm</location>
    </subcellularLocation>
</comment>
<comment type="similarity">
    <text evidence="1">Belongs to the TRAFAC class translation factor GTPase superfamily. Classic translation factor GTPase family. EF-G/EF-2 subfamily.</text>
</comment>
<dbReference type="EMBL" id="CP000943">
    <property type="protein sequence ID" value="ACA14927.1"/>
    <property type="molecule type" value="Genomic_DNA"/>
</dbReference>
<dbReference type="RefSeq" id="WP_012330345.1">
    <property type="nucleotide sequence ID" value="NC_010511.1"/>
</dbReference>
<dbReference type="SMR" id="B0UHX2"/>
<dbReference type="STRING" id="426117.M446_0356"/>
<dbReference type="KEGG" id="met:M446_0356"/>
<dbReference type="eggNOG" id="COG0480">
    <property type="taxonomic scope" value="Bacteria"/>
</dbReference>
<dbReference type="HOGENOM" id="CLU_002794_4_1_5"/>
<dbReference type="GO" id="GO:0005737">
    <property type="term" value="C:cytoplasm"/>
    <property type="evidence" value="ECO:0007669"/>
    <property type="project" value="UniProtKB-SubCell"/>
</dbReference>
<dbReference type="GO" id="GO:0005525">
    <property type="term" value="F:GTP binding"/>
    <property type="evidence" value="ECO:0007669"/>
    <property type="project" value="UniProtKB-UniRule"/>
</dbReference>
<dbReference type="GO" id="GO:0003924">
    <property type="term" value="F:GTPase activity"/>
    <property type="evidence" value="ECO:0007669"/>
    <property type="project" value="InterPro"/>
</dbReference>
<dbReference type="GO" id="GO:0003746">
    <property type="term" value="F:translation elongation factor activity"/>
    <property type="evidence" value="ECO:0007669"/>
    <property type="project" value="UniProtKB-UniRule"/>
</dbReference>
<dbReference type="GO" id="GO:0032790">
    <property type="term" value="P:ribosome disassembly"/>
    <property type="evidence" value="ECO:0007669"/>
    <property type="project" value="TreeGrafter"/>
</dbReference>
<dbReference type="CDD" id="cd01886">
    <property type="entry name" value="EF-G"/>
    <property type="match status" value="1"/>
</dbReference>
<dbReference type="CDD" id="cd16262">
    <property type="entry name" value="EFG_III"/>
    <property type="match status" value="1"/>
</dbReference>
<dbReference type="CDD" id="cd01434">
    <property type="entry name" value="EFG_mtEFG1_IV"/>
    <property type="match status" value="1"/>
</dbReference>
<dbReference type="CDD" id="cd03713">
    <property type="entry name" value="EFG_mtEFG_C"/>
    <property type="match status" value="1"/>
</dbReference>
<dbReference type="CDD" id="cd04088">
    <property type="entry name" value="EFG_mtEFG_II"/>
    <property type="match status" value="1"/>
</dbReference>
<dbReference type="FunFam" id="2.40.30.10:FF:000006">
    <property type="entry name" value="Elongation factor G"/>
    <property type="match status" value="1"/>
</dbReference>
<dbReference type="FunFam" id="3.30.230.10:FF:000003">
    <property type="entry name" value="Elongation factor G"/>
    <property type="match status" value="1"/>
</dbReference>
<dbReference type="FunFam" id="3.30.70.240:FF:000001">
    <property type="entry name" value="Elongation factor G"/>
    <property type="match status" value="1"/>
</dbReference>
<dbReference type="FunFam" id="3.30.70.870:FF:000001">
    <property type="entry name" value="Elongation factor G"/>
    <property type="match status" value="1"/>
</dbReference>
<dbReference type="FunFam" id="3.40.50.300:FF:000029">
    <property type="entry name" value="Elongation factor G"/>
    <property type="match status" value="1"/>
</dbReference>
<dbReference type="Gene3D" id="3.30.230.10">
    <property type="match status" value="1"/>
</dbReference>
<dbReference type="Gene3D" id="3.30.70.240">
    <property type="match status" value="1"/>
</dbReference>
<dbReference type="Gene3D" id="3.30.70.870">
    <property type="entry name" value="Elongation Factor G (Translational Gtpase), domain 3"/>
    <property type="match status" value="1"/>
</dbReference>
<dbReference type="Gene3D" id="3.40.50.300">
    <property type="entry name" value="P-loop containing nucleotide triphosphate hydrolases"/>
    <property type="match status" value="1"/>
</dbReference>
<dbReference type="Gene3D" id="2.40.30.10">
    <property type="entry name" value="Translation factors"/>
    <property type="match status" value="1"/>
</dbReference>
<dbReference type="HAMAP" id="MF_00054_B">
    <property type="entry name" value="EF_G_EF_2_B"/>
    <property type="match status" value="1"/>
</dbReference>
<dbReference type="InterPro" id="IPR053905">
    <property type="entry name" value="EF-G-like_DII"/>
</dbReference>
<dbReference type="InterPro" id="IPR041095">
    <property type="entry name" value="EFG_II"/>
</dbReference>
<dbReference type="InterPro" id="IPR009022">
    <property type="entry name" value="EFG_III"/>
</dbReference>
<dbReference type="InterPro" id="IPR035647">
    <property type="entry name" value="EFG_III/V"/>
</dbReference>
<dbReference type="InterPro" id="IPR047872">
    <property type="entry name" value="EFG_IV"/>
</dbReference>
<dbReference type="InterPro" id="IPR035649">
    <property type="entry name" value="EFG_V"/>
</dbReference>
<dbReference type="InterPro" id="IPR000640">
    <property type="entry name" value="EFG_V-like"/>
</dbReference>
<dbReference type="InterPro" id="IPR031157">
    <property type="entry name" value="G_TR_CS"/>
</dbReference>
<dbReference type="InterPro" id="IPR027417">
    <property type="entry name" value="P-loop_NTPase"/>
</dbReference>
<dbReference type="InterPro" id="IPR020568">
    <property type="entry name" value="Ribosomal_Su5_D2-typ_SF"/>
</dbReference>
<dbReference type="InterPro" id="IPR014721">
    <property type="entry name" value="Ribsml_uS5_D2-typ_fold_subgr"/>
</dbReference>
<dbReference type="InterPro" id="IPR005225">
    <property type="entry name" value="Small_GTP-bd"/>
</dbReference>
<dbReference type="InterPro" id="IPR000795">
    <property type="entry name" value="T_Tr_GTP-bd_dom"/>
</dbReference>
<dbReference type="InterPro" id="IPR009000">
    <property type="entry name" value="Transl_B-barrel_sf"/>
</dbReference>
<dbReference type="InterPro" id="IPR004540">
    <property type="entry name" value="Transl_elong_EFG/EF2"/>
</dbReference>
<dbReference type="InterPro" id="IPR005517">
    <property type="entry name" value="Transl_elong_EFG/EF2_IV"/>
</dbReference>
<dbReference type="NCBIfam" id="TIGR00484">
    <property type="entry name" value="EF-G"/>
    <property type="match status" value="1"/>
</dbReference>
<dbReference type="NCBIfam" id="NF009379">
    <property type="entry name" value="PRK12740.1-3"/>
    <property type="match status" value="1"/>
</dbReference>
<dbReference type="NCBIfam" id="NF009381">
    <property type="entry name" value="PRK12740.1-5"/>
    <property type="match status" value="1"/>
</dbReference>
<dbReference type="NCBIfam" id="TIGR00231">
    <property type="entry name" value="small_GTP"/>
    <property type="match status" value="1"/>
</dbReference>
<dbReference type="PANTHER" id="PTHR43261:SF1">
    <property type="entry name" value="RIBOSOME-RELEASING FACTOR 2, MITOCHONDRIAL"/>
    <property type="match status" value="1"/>
</dbReference>
<dbReference type="PANTHER" id="PTHR43261">
    <property type="entry name" value="TRANSLATION ELONGATION FACTOR G-RELATED"/>
    <property type="match status" value="1"/>
</dbReference>
<dbReference type="Pfam" id="PF22042">
    <property type="entry name" value="EF-G_D2"/>
    <property type="match status" value="1"/>
</dbReference>
<dbReference type="Pfam" id="PF00679">
    <property type="entry name" value="EFG_C"/>
    <property type="match status" value="1"/>
</dbReference>
<dbReference type="Pfam" id="PF14492">
    <property type="entry name" value="EFG_III"/>
    <property type="match status" value="1"/>
</dbReference>
<dbReference type="Pfam" id="PF03764">
    <property type="entry name" value="EFG_IV"/>
    <property type="match status" value="1"/>
</dbReference>
<dbReference type="Pfam" id="PF00009">
    <property type="entry name" value="GTP_EFTU"/>
    <property type="match status" value="1"/>
</dbReference>
<dbReference type="PRINTS" id="PR00315">
    <property type="entry name" value="ELONGATNFCT"/>
</dbReference>
<dbReference type="SMART" id="SM00838">
    <property type="entry name" value="EFG_C"/>
    <property type="match status" value="1"/>
</dbReference>
<dbReference type="SMART" id="SM00889">
    <property type="entry name" value="EFG_IV"/>
    <property type="match status" value="1"/>
</dbReference>
<dbReference type="SUPFAM" id="SSF54980">
    <property type="entry name" value="EF-G C-terminal domain-like"/>
    <property type="match status" value="2"/>
</dbReference>
<dbReference type="SUPFAM" id="SSF52540">
    <property type="entry name" value="P-loop containing nucleoside triphosphate hydrolases"/>
    <property type="match status" value="1"/>
</dbReference>
<dbReference type="SUPFAM" id="SSF54211">
    <property type="entry name" value="Ribosomal protein S5 domain 2-like"/>
    <property type="match status" value="1"/>
</dbReference>
<dbReference type="SUPFAM" id="SSF50447">
    <property type="entry name" value="Translation proteins"/>
    <property type="match status" value="1"/>
</dbReference>
<dbReference type="PROSITE" id="PS00301">
    <property type="entry name" value="G_TR_1"/>
    <property type="match status" value="1"/>
</dbReference>
<dbReference type="PROSITE" id="PS51722">
    <property type="entry name" value="G_TR_2"/>
    <property type="match status" value="1"/>
</dbReference>
<keyword id="KW-0963">Cytoplasm</keyword>
<keyword id="KW-0251">Elongation factor</keyword>
<keyword id="KW-0342">GTP-binding</keyword>
<keyword id="KW-0547">Nucleotide-binding</keyword>
<keyword id="KW-0648">Protein biosynthesis</keyword>
<accession>B0UHX2</accession>
<gene>
    <name evidence="1" type="primary">fusA</name>
    <name type="ordered locus">M446_0356</name>
</gene>
<protein>
    <recommendedName>
        <fullName evidence="1">Elongation factor G</fullName>
        <shortName evidence="1">EF-G</shortName>
    </recommendedName>
</protein>
<feature type="chain" id="PRO_1000091734" description="Elongation factor G">
    <location>
        <begin position="1"/>
        <end position="691"/>
    </location>
</feature>
<feature type="domain" description="tr-type G">
    <location>
        <begin position="8"/>
        <end position="283"/>
    </location>
</feature>
<feature type="binding site" evidence="1">
    <location>
        <begin position="17"/>
        <end position="24"/>
    </location>
    <ligand>
        <name>GTP</name>
        <dbReference type="ChEBI" id="CHEBI:37565"/>
    </ligand>
</feature>
<feature type="binding site" evidence="1">
    <location>
        <begin position="81"/>
        <end position="85"/>
    </location>
    <ligand>
        <name>GTP</name>
        <dbReference type="ChEBI" id="CHEBI:37565"/>
    </ligand>
</feature>
<feature type="binding site" evidence="1">
    <location>
        <begin position="135"/>
        <end position="138"/>
    </location>
    <ligand>
        <name>GTP</name>
        <dbReference type="ChEBI" id="CHEBI:37565"/>
    </ligand>
</feature>
<evidence type="ECO:0000255" key="1">
    <source>
        <dbReference type="HAMAP-Rule" id="MF_00054"/>
    </source>
</evidence>
<reference key="1">
    <citation type="submission" date="2008-02" db="EMBL/GenBank/DDBJ databases">
        <title>Complete sequence of chromosome of Methylobacterium sp. 4-46.</title>
        <authorList>
            <consortium name="US DOE Joint Genome Institute"/>
            <person name="Copeland A."/>
            <person name="Lucas S."/>
            <person name="Lapidus A."/>
            <person name="Glavina del Rio T."/>
            <person name="Dalin E."/>
            <person name="Tice H."/>
            <person name="Bruce D."/>
            <person name="Goodwin L."/>
            <person name="Pitluck S."/>
            <person name="Chertkov O."/>
            <person name="Brettin T."/>
            <person name="Detter J.C."/>
            <person name="Han C."/>
            <person name="Kuske C.R."/>
            <person name="Schmutz J."/>
            <person name="Larimer F."/>
            <person name="Land M."/>
            <person name="Hauser L."/>
            <person name="Kyrpides N."/>
            <person name="Ivanova N."/>
            <person name="Marx C.J."/>
            <person name="Richardson P."/>
        </authorList>
    </citation>
    <scope>NUCLEOTIDE SEQUENCE [LARGE SCALE GENOMIC DNA]</scope>
    <source>
        <strain>4-46</strain>
    </source>
</reference>
<proteinExistence type="inferred from homology"/>
<sequence length="691" mass="76343">MPRTHAIEDYRNFGIMAHIDAGKTTTTERILYYTGKSHKIGEVHEGAATMDWMEQEQERGITITSAATTCFWRDKRLNIIDTPGHVDFTIEVERSLRVLDGAVCVLDGNQGVEPQTETVWRQADKYDVPRVVFVNKMDKIGADFFKCVADIIDRVAGKPVCLQLPIGSENNFRGVIDLIKMKAIVWSGEALGANFSEEAIPADLAEQAAEYRTKLIEACVEMDDDAMTAYLDGVEPDEDTMRRLVRTAVQRRAFHPVLCGSAFKNKGVQPLLDAVVDYLPSPADRGEIKGIDYKTEEEVVRRPSDAEPFSMLAFKIMDDPHVGTITFCRIYSGKVESGANLLNSTRDKRERVGRMLLMHANNREDIKEAYAGDIVALAGLKDTRTGDTLCDPTKAVILEKMEFPEPVIEIAVEPKSKADQEKLGIALSKLAAEDPSFRVSTDPESGQTILKGMGELHLDIKVDILKRTYKVEANIGQPQVAYREKLTRRTEIDYTHKKQTGGTGQFARVKLVVEPNEPGAGYAFESKIVGGAVPKEYVPGVEKGLNSVLTAGILAGFPVVDIKVELIDGAYHEVDSSALAFEIASRAALREALQKGGSVLLEPVMKVEVVTPEDYTGSVIGDLNSRRGQIQGQDMRGNANVINAMVPLANMFGYVNQLRSFTQGRANFTMQFDHYEEVPRGEAEKVVAKYA</sequence>
<name>EFG_METS4</name>